<organism>
    <name type="scientific">Hydrogenobaculum sp. (strain Y04AAS1)</name>
    <dbReference type="NCBI Taxonomy" id="380749"/>
    <lineage>
        <taxon>Bacteria</taxon>
        <taxon>Pseudomonadati</taxon>
        <taxon>Aquificota</taxon>
        <taxon>Aquificia</taxon>
        <taxon>Aquificales</taxon>
        <taxon>Aquificaceae</taxon>
        <taxon>Hydrogenobaculum</taxon>
    </lineage>
</organism>
<sequence length="349" mass="39924">MFSKRIKLLKAYKTETTPCHIKLSSNENPFDLEESVKLELLEVIKNIEFNRYPDPHATKLRQTLSKLYEVEPENIMVCNGSDEAIQYLMLGIGELDEGVLIPRPTFPMYEVIANALGKPIYDVDLDENFQMNKQTLQKALEKKPSIAFISNPNNPTGNLFRDEDIALIRKHTFTVVDEAYYDFCGKTYIKDAIKDDNMAVMRTLSKIGLASLRVGALIGTKEFIREISKLKMPFNVSYTSQAMADYIISNHIDNIKNQIKVLIDERHRLKEALSDIKGIKVYDSCANFFLIKVNDADFIHKSLIQKGILTRNISYLPNLENHIRISIGKKEENDALINALKEIAQQVYL</sequence>
<proteinExistence type="inferred from homology"/>
<accession>B4U9L1</accession>
<name>HIS8_HYDS0</name>
<feature type="chain" id="PRO_1000135403" description="Histidinol-phosphate aminotransferase">
    <location>
        <begin position="1"/>
        <end position="349"/>
    </location>
</feature>
<feature type="modified residue" description="N6-(pyridoxal phosphate)lysine" evidence="1">
    <location>
        <position position="206"/>
    </location>
</feature>
<gene>
    <name evidence="1" type="primary">hisC</name>
    <name type="ordered locus">HY04AAS1_1136</name>
</gene>
<comment type="catalytic activity">
    <reaction evidence="1">
        <text>L-histidinol phosphate + 2-oxoglutarate = 3-(imidazol-4-yl)-2-oxopropyl phosphate + L-glutamate</text>
        <dbReference type="Rhea" id="RHEA:23744"/>
        <dbReference type="ChEBI" id="CHEBI:16810"/>
        <dbReference type="ChEBI" id="CHEBI:29985"/>
        <dbReference type="ChEBI" id="CHEBI:57766"/>
        <dbReference type="ChEBI" id="CHEBI:57980"/>
        <dbReference type="EC" id="2.6.1.9"/>
    </reaction>
</comment>
<comment type="cofactor">
    <cofactor evidence="1">
        <name>pyridoxal 5'-phosphate</name>
        <dbReference type="ChEBI" id="CHEBI:597326"/>
    </cofactor>
</comment>
<comment type="pathway">
    <text evidence="1">Amino-acid biosynthesis; L-histidine biosynthesis; L-histidine from 5-phospho-alpha-D-ribose 1-diphosphate: step 7/9.</text>
</comment>
<comment type="subunit">
    <text evidence="1">Homodimer.</text>
</comment>
<comment type="similarity">
    <text evidence="1">Belongs to the class-II pyridoxal-phosphate-dependent aminotransferase family. Histidinol-phosphate aminotransferase subfamily.</text>
</comment>
<protein>
    <recommendedName>
        <fullName evidence="1">Histidinol-phosphate aminotransferase</fullName>
        <ecNumber evidence="1">2.6.1.9</ecNumber>
    </recommendedName>
    <alternativeName>
        <fullName evidence="1">Imidazole acetol-phosphate transaminase</fullName>
    </alternativeName>
</protein>
<dbReference type="EC" id="2.6.1.9" evidence="1"/>
<dbReference type="EMBL" id="CP001130">
    <property type="protein sequence ID" value="ACG57822.1"/>
    <property type="molecule type" value="Genomic_DNA"/>
</dbReference>
<dbReference type="RefSeq" id="WP_012514178.1">
    <property type="nucleotide sequence ID" value="NC_011126.1"/>
</dbReference>
<dbReference type="SMR" id="B4U9L1"/>
<dbReference type="STRING" id="380749.HY04AAS1_1136"/>
<dbReference type="KEGG" id="hya:HY04AAS1_1136"/>
<dbReference type="eggNOG" id="COG0079">
    <property type="taxonomic scope" value="Bacteria"/>
</dbReference>
<dbReference type="HOGENOM" id="CLU_017584_3_1_0"/>
<dbReference type="OrthoDB" id="9813612at2"/>
<dbReference type="UniPathway" id="UPA00031">
    <property type="reaction ID" value="UER00012"/>
</dbReference>
<dbReference type="GO" id="GO:0004400">
    <property type="term" value="F:histidinol-phosphate transaminase activity"/>
    <property type="evidence" value="ECO:0007669"/>
    <property type="project" value="UniProtKB-UniRule"/>
</dbReference>
<dbReference type="GO" id="GO:0030170">
    <property type="term" value="F:pyridoxal phosphate binding"/>
    <property type="evidence" value="ECO:0007669"/>
    <property type="project" value="InterPro"/>
</dbReference>
<dbReference type="GO" id="GO:0000105">
    <property type="term" value="P:L-histidine biosynthetic process"/>
    <property type="evidence" value="ECO:0007669"/>
    <property type="project" value="UniProtKB-UniRule"/>
</dbReference>
<dbReference type="CDD" id="cd00609">
    <property type="entry name" value="AAT_like"/>
    <property type="match status" value="1"/>
</dbReference>
<dbReference type="Gene3D" id="3.90.1150.10">
    <property type="entry name" value="Aspartate Aminotransferase, domain 1"/>
    <property type="match status" value="1"/>
</dbReference>
<dbReference type="Gene3D" id="3.40.640.10">
    <property type="entry name" value="Type I PLP-dependent aspartate aminotransferase-like (Major domain)"/>
    <property type="match status" value="1"/>
</dbReference>
<dbReference type="HAMAP" id="MF_01023">
    <property type="entry name" value="HisC_aminotrans_2"/>
    <property type="match status" value="1"/>
</dbReference>
<dbReference type="InterPro" id="IPR004839">
    <property type="entry name" value="Aminotransferase_I/II_large"/>
</dbReference>
<dbReference type="InterPro" id="IPR005861">
    <property type="entry name" value="HisP_aminotrans"/>
</dbReference>
<dbReference type="InterPro" id="IPR015424">
    <property type="entry name" value="PyrdxlP-dep_Trfase"/>
</dbReference>
<dbReference type="InterPro" id="IPR015421">
    <property type="entry name" value="PyrdxlP-dep_Trfase_major"/>
</dbReference>
<dbReference type="InterPro" id="IPR015422">
    <property type="entry name" value="PyrdxlP-dep_Trfase_small"/>
</dbReference>
<dbReference type="NCBIfam" id="TIGR01141">
    <property type="entry name" value="hisC"/>
    <property type="match status" value="1"/>
</dbReference>
<dbReference type="PANTHER" id="PTHR42885:SF2">
    <property type="entry name" value="HISTIDINOL-PHOSPHATE AMINOTRANSFERASE"/>
    <property type="match status" value="1"/>
</dbReference>
<dbReference type="PANTHER" id="PTHR42885">
    <property type="entry name" value="HISTIDINOL-PHOSPHATE AMINOTRANSFERASE-RELATED"/>
    <property type="match status" value="1"/>
</dbReference>
<dbReference type="Pfam" id="PF00155">
    <property type="entry name" value="Aminotran_1_2"/>
    <property type="match status" value="1"/>
</dbReference>
<dbReference type="SUPFAM" id="SSF53383">
    <property type="entry name" value="PLP-dependent transferases"/>
    <property type="match status" value="1"/>
</dbReference>
<keyword id="KW-0028">Amino-acid biosynthesis</keyword>
<keyword id="KW-0032">Aminotransferase</keyword>
<keyword id="KW-0368">Histidine biosynthesis</keyword>
<keyword id="KW-0663">Pyridoxal phosphate</keyword>
<keyword id="KW-0808">Transferase</keyword>
<evidence type="ECO:0000255" key="1">
    <source>
        <dbReference type="HAMAP-Rule" id="MF_01023"/>
    </source>
</evidence>
<reference key="1">
    <citation type="journal article" date="2009" name="J. Bacteriol.">
        <title>Complete and draft genome sequences of six members of the Aquificales.</title>
        <authorList>
            <person name="Reysenbach A.-L."/>
            <person name="Hamamura N."/>
            <person name="Podar M."/>
            <person name="Griffiths E."/>
            <person name="Ferreira S."/>
            <person name="Hochstein R."/>
            <person name="Heidelberg J."/>
            <person name="Johnson J."/>
            <person name="Mead D."/>
            <person name="Pohorille A."/>
            <person name="Sarmiento M."/>
            <person name="Schweighofer K."/>
            <person name="Seshadri R."/>
            <person name="Voytek M.A."/>
        </authorList>
    </citation>
    <scope>NUCLEOTIDE SEQUENCE [LARGE SCALE GENOMIC DNA]</scope>
    <source>
        <strain>Y04AAS1</strain>
    </source>
</reference>